<organism>
    <name type="scientific">Shewanella baltica (strain OS155 / ATCC BAA-1091)</name>
    <dbReference type="NCBI Taxonomy" id="325240"/>
    <lineage>
        <taxon>Bacteria</taxon>
        <taxon>Pseudomonadati</taxon>
        <taxon>Pseudomonadota</taxon>
        <taxon>Gammaproteobacteria</taxon>
        <taxon>Alteromonadales</taxon>
        <taxon>Shewanellaceae</taxon>
        <taxon>Shewanella</taxon>
    </lineage>
</organism>
<feature type="chain" id="PRO_1000003348" description="2-dehydro-3-deoxyphosphooctonate aldolase">
    <location>
        <begin position="1"/>
        <end position="282"/>
    </location>
</feature>
<name>KDSA_SHEB5</name>
<proteinExistence type="inferred from homology"/>
<keyword id="KW-0963">Cytoplasm</keyword>
<keyword id="KW-0448">Lipopolysaccharide biosynthesis</keyword>
<keyword id="KW-1185">Reference proteome</keyword>
<keyword id="KW-0808">Transferase</keyword>
<reference key="1">
    <citation type="submission" date="2007-02" db="EMBL/GenBank/DDBJ databases">
        <title>Complete sequence of chromosome of Shewanella baltica OS155.</title>
        <authorList>
            <consortium name="US DOE Joint Genome Institute"/>
            <person name="Copeland A."/>
            <person name="Lucas S."/>
            <person name="Lapidus A."/>
            <person name="Barry K."/>
            <person name="Detter J.C."/>
            <person name="Glavina del Rio T."/>
            <person name="Hammon N."/>
            <person name="Israni S."/>
            <person name="Dalin E."/>
            <person name="Tice H."/>
            <person name="Pitluck S."/>
            <person name="Sims D.R."/>
            <person name="Brettin T."/>
            <person name="Bruce D."/>
            <person name="Han C."/>
            <person name="Tapia R."/>
            <person name="Brainard J."/>
            <person name="Schmutz J."/>
            <person name="Larimer F."/>
            <person name="Land M."/>
            <person name="Hauser L."/>
            <person name="Kyrpides N."/>
            <person name="Mikhailova N."/>
            <person name="Brettar I."/>
            <person name="Klappenbach J."/>
            <person name="Konstantinidis K."/>
            <person name="Rodrigues J."/>
            <person name="Tiedje J."/>
            <person name="Richardson P."/>
        </authorList>
    </citation>
    <scope>NUCLEOTIDE SEQUENCE [LARGE SCALE GENOMIC DNA]</scope>
    <source>
        <strain>OS155 / ATCC BAA-1091</strain>
    </source>
</reference>
<sequence>MSNKIINLGSIEIANDKPFVLFGGMNVLESRDLAMSIAETYAEVTQKLGIPYVFKASFDKANRSSINSYRGPGMEEGLKIFEEIKKTFNLPLITDVHEVHQCAPVAEVVDIIQLPAFLARQTDLVVAMAKTGAIINVKKPQFLAPHEMRHIITKFNEAGNDEIILCERGSSFGYNNLVVDMLGMDEMKQSGYPVIFDATHALQRPGGRADSAGGRRAQATELARSGMALGLAGLFIEAHPDPDNAKCDGPCALPLHQLENYLKQMKAIDDLVKSFEPIDTSK</sequence>
<dbReference type="EC" id="2.5.1.55" evidence="1"/>
<dbReference type="EMBL" id="CP000563">
    <property type="protein sequence ID" value="ABN60231.1"/>
    <property type="molecule type" value="Genomic_DNA"/>
</dbReference>
<dbReference type="RefSeq" id="WP_006080266.1">
    <property type="nucleotide sequence ID" value="NC_009052.1"/>
</dbReference>
<dbReference type="SMR" id="A3D0G8"/>
<dbReference type="STRING" id="325240.Sbal_0703"/>
<dbReference type="GeneID" id="11773752"/>
<dbReference type="KEGG" id="sbl:Sbal_0703"/>
<dbReference type="HOGENOM" id="CLU_036666_0_0_6"/>
<dbReference type="OrthoDB" id="9776934at2"/>
<dbReference type="UniPathway" id="UPA00030"/>
<dbReference type="UniPathway" id="UPA00357">
    <property type="reaction ID" value="UER00474"/>
</dbReference>
<dbReference type="Proteomes" id="UP000001557">
    <property type="component" value="Chromosome"/>
</dbReference>
<dbReference type="GO" id="GO:0005737">
    <property type="term" value="C:cytoplasm"/>
    <property type="evidence" value="ECO:0007669"/>
    <property type="project" value="UniProtKB-SubCell"/>
</dbReference>
<dbReference type="GO" id="GO:0008676">
    <property type="term" value="F:3-deoxy-8-phosphooctulonate synthase activity"/>
    <property type="evidence" value="ECO:0007669"/>
    <property type="project" value="UniProtKB-UniRule"/>
</dbReference>
<dbReference type="GO" id="GO:0019294">
    <property type="term" value="P:keto-3-deoxy-D-manno-octulosonic acid biosynthetic process"/>
    <property type="evidence" value="ECO:0007669"/>
    <property type="project" value="UniProtKB-UniRule"/>
</dbReference>
<dbReference type="Gene3D" id="3.20.20.70">
    <property type="entry name" value="Aldolase class I"/>
    <property type="match status" value="1"/>
</dbReference>
<dbReference type="HAMAP" id="MF_00056">
    <property type="entry name" value="KDO8P_synth"/>
    <property type="match status" value="1"/>
</dbReference>
<dbReference type="InterPro" id="IPR013785">
    <property type="entry name" value="Aldolase_TIM"/>
</dbReference>
<dbReference type="InterPro" id="IPR006218">
    <property type="entry name" value="DAHP1/KDSA"/>
</dbReference>
<dbReference type="InterPro" id="IPR006269">
    <property type="entry name" value="KDO8P_synthase"/>
</dbReference>
<dbReference type="NCBIfam" id="TIGR01362">
    <property type="entry name" value="KDO8P_synth"/>
    <property type="match status" value="1"/>
</dbReference>
<dbReference type="NCBIfam" id="NF003543">
    <property type="entry name" value="PRK05198.1"/>
    <property type="match status" value="1"/>
</dbReference>
<dbReference type="NCBIfam" id="NF009109">
    <property type="entry name" value="PRK12457.1"/>
    <property type="match status" value="1"/>
</dbReference>
<dbReference type="PANTHER" id="PTHR21057">
    <property type="entry name" value="PHOSPHO-2-DEHYDRO-3-DEOXYHEPTONATE ALDOLASE"/>
    <property type="match status" value="1"/>
</dbReference>
<dbReference type="Pfam" id="PF00793">
    <property type="entry name" value="DAHP_synth_1"/>
    <property type="match status" value="1"/>
</dbReference>
<dbReference type="SUPFAM" id="SSF51569">
    <property type="entry name" value="Aldolase"/>
    <property type="match status" value="1"/>
</dbReference>
<protein>
    <recommendedName>
        <fullName evidence="1">2-dehydro-3-deoxyphosphooctonate aldolase</fullName>
        <ecNumber evidence="1">2.5.1.55</ecNumber>
    </recommendedName>
    <alternativeName>
        <fullName evidence="1">3-deoxy-D-manno-octulosonic acid 8-phosphate synthase</fullName>
    </alternativeName>
    <alternativeName>
        <fullName evidence="1">KDO-8-phosphate synthase</fullName>
        <shortName evidence="1">KDO 8-P synthase</shortName>
        <shortName evidence="1">KDOPS</shortName>
    </alternativeName>
    <alternativeName>
        <fullName evidence="1">Phospho-2-dehydro-3-deoxyoctonate aldolase</fullName>
    </alternativeName>
</protein>
<gene>
    <name evidence="1" type="primary">kdsA</name>
    <name type="ordered locus">Sbal_0703</name>
</gene>
<accession>A3D0G8</accession>
<evidence type="ECO:0000255" key="1">
    <source>
        <dbReference type="HAMAP-Rule" id="MF_00056"/>
    </source>
</evidence>
<comment type="catalytic activity">
    <reaction evidence="1">
        <text>D-arabinose 5-phosphate + phosphoenolpyruvate + H2O = 3-deoxy-alpha-D-manno-2-octulosonate-8-phosphate + phosphate</text>
        <dbReference type="Rhea" id="RHEA:14053"/>
        <dbReference type="ChEBI" id="CHEBI:15377"/>
        <dbReference type="ChEBI" id="CHEBI:43474"/>
        <dbReference type="ChEBI" id="CHEBI:57693"/>
        <dbReference type="ChEBI" id="CHEBI:58702"/>
        <dbReference type="ChEBI" id="CHEBI:85985"/>
        <dbReference type="EC" id="2.5.1.55"/>
    </reaction>
</comment>
<comment type="pathway">
    <text evidence="1">Carbohydrate biosynthesis; 3-deoxy-D-manno-octulosonate biosynthesis; 3-deoxy-D-manno-octulosonate from D-ribulose 5-phosphate: step 2/3.</text>
</comment>
<comment type="pathway">
    <text evidence="1">Bacterial outer membrane biogenesis; lipopolysaccharide biosynthesis.</text>
</comment>
<comment type="subcellular location">
    <subcellularLocation>
        <location evidence="1">Cytoplasm</location>
    </subcellularLocation>
</comment>
<comment type="similarity">
    <text evidence="1">Belongs to the KdsA family.</text>
</comment>